<gene>
    <name evidence="1" type="primary">rimO</name>
    <name type="ordered locus">BF2507</name>
</gene>
<keyword id="KW-0004">4Fe-4S</keyword>
<keyword id="KW-0963">Cytoplasm</keyword>
<keyword id="KW-0408">Iron</keyword>
<keyword id="KW-0411">Iron-sulfur</keyword>
<keyword id="KW-0479">Metal-binding</keyword>
<keyword id="KW-0949">S-adenosyl-L-methionine</keyword>
<keyword id="KW-0808">Transferase</keyword>
<feature type="chain" id="PRO_0000374706" description="Ribosomal protein uS12 methylthiotransferase RimO">
    <location>
        <begin position="1"/>
        <end position="432"/>
    </location>
</feature>
<feature type="domain" description="MTTase N-terminal" evidence="1">
    <location>
        <begin position="4"/>
        <end position="122"/>
    </location>
</feature>
<feature type="domain" description="Radical SAM core" evidence="2">
    <location>
        <begin position="132"/>
        <end position="363"/>
    </location>
</feature>
<feature type="domain" description="TRAM" evidence="1">
    <location>
        <begin position="366"/>
        <end position="432"/>
    </location>
</feature>
<feature type="binding site" evidence="1">
    <location>
        <position position="13"/>
    </location>
    <ligand>
        <name>[4Fe-4S] cluster</name>
        <dbReference type="ChEBI" id="CHEBI:49883"/>
        <label>1</label>
    </ligand>
</feature>
<feature type="binding site" evidence="1">
    <location>
        <position position="51"/>
    </location>
    <ligand>
        <name>[4Fe-4S] cluster</name>
        <dbReference type="ChEBI" id="CHEBI:49883"/>
        <label>1</label>
    </ligand>
</feature>
<feature type="binding site" evidence="1">
    <location>
        <position position="85"/>
    </location>
    <ligand>
        <name>[4Fe-4S] cluster</name>
        <dbReference type="ChEBI" id="CHEBI:49883"/>
        <label>1</label>
    </ligand>
</feature>
<feature type="binding site" evidence="1">
    <location>
        <position position="146"/>
    </location>
    <ligand>
        <name>[4Fe-4S] cluster</name>
        <dbReference type="ChEBI" id="CHEBI:49883"/>
        <label>2</label>
        <note>4Fe-4S-S-AdoMet</note>
    </ligand>
</feature>
<feature type="binding site" evidence="1">
    <location>
        <position position="150"/>
    </location>
    <ligand>
        <name>[4Fe-4S] cluster</name>
        <dbReference type="ChEBI" id="CHEBI:49883"/>
        <label>2</label>
        <note>4Fe-4S-S-AdoMet</note>
    </ligand>
</feature>
<feature type="binding site" evidence="1">
    <location>
        <position position="153"/>
    </location>
    <ligand>
        <name>[4Fe-4S] cluster</name>
        <dbReference type="ChEBI" id="CHEBI:49883"/>
        <label>2</label>
        <note>4Fe-4S-S-AdoMet</note>
    </ligand>
</feature>
<name>RIMO_BACFN</name>
<organism>
    <name type="scientific">Bacteroides fragilis (strain ATCC 25285 / DSM 2151 / CCUG 4856 / JCM 11019 / LMG 10263 / NCTC 9343 / Onslow / VPI 2553 / EN-2)</name>
    <dbReference type="NCBI Taxonomy" id="272559"/>
    <lineage>
        <taxon>Bacteria</taxon>
        <taxon>Pseudomonadati</taxon>
        <taxon>Bacteroidota</taxon>
        <taxon>Bacteroidia</taxon>
        <taxon>Bacteroidales</taxon>
        <taxon>Bacteroidaceae</taxon>
        <taxon>Bacteroides</taxon>
    </lineage>
</organism>
<proteinExistence type="inferred from homology"/>
<accession>Q5LCF8</accession>
<reference key="1">
    <citation type="journal article" date="2005" name="Science">
        <title>Extensive DNA inversions in the B. fragilis genome control variable gene expression.</title>
        <authorList>
            <person name="Cerdeno-Tarraga A.-M."/>
            <person name="Patrick S."/>
            <person name="Crossman L.C."/>
            <person name="Blakely G."/>
            <person name="Abratt V."/>
            <person name="Lennard N."/>
            <person name="Poxton I."/>
            <person name="Duerden B."/>
            <person name="Harris B."/>
            <person name="Quail M.A."/>
            <person name="Barron A."/>
            <person name="Clark L."/>
            <person name="Corton C."/>
            <person name="Doggett J."/>
            <person name="Holden M.T.G."/>
            <person name="Larke N."/>
            <person name="Line A."/>
            <person name="Lord A."/>
            <person name="Norbertczak H."/>
            <person name="Ormond D."/>
            <person name="Price C."/>
            <person name="Rabbinowitsch E."/>
            <person name="Woodward J."/>
            <person name="Barrell B.G."/>
            <person name="Parkhill J."/>
        </authorList>
    </citation>
    <scope>NUCLEOTIDE SEQUENCE [LARGE SCALE GENOMIC DNA]</scope>
    <source>
        <strain>ATCC 25285 / DSM 2151 / CCUG 4856 / JCM 11019 / LMG 10263 / NCTC 9343 / Onslow / VPI 2553 / EN-2</strain>
    </source>
</reference>
<sequence length="432" mass="50196">MKRKTIDIITLGCSKNLVDSEQLMRQLEEAGYDVTHDSEKPTGEIAVINTCGFIGDAKEESINMILEFAQEKEEGNLEKLFVMGCLSERYLKELAIEIPQVDKFYGKFNWKGLLQDLGKAYHEELHIERTLTTPKHYAYLKISEGCDRKCSYCAIPIITGRHVSRPIEEILDEVRYLVSNGVKEFQVIAQELTYYGVDLYKKQMLPELIERISEIPGVEWIRLHYAYPAHFPEELFRVMRERDNVCKYMDIALQHISDNMLQRMRRHVTKKETYRLIEQFRKEVPGIHLRTTLMVGHPGETEGDFEELKEFVRKVRFDRMGAFTYSEEEGTYAAANYEDSIPQELKQARLDELMAIQQGISTELSASKVGQKMKVIIDRIEGEYYIGRTEFDSPEVDPEVLIRCEGDNLMIGNFYQVQVIDSDEFDLFGEII</sequence>
<protein>
    <recommendedName>
        <fullName evidence="1">Ribosomal protein uS12 methylthiotransferase RimO</fullName>
        <shortName evidence="1">uS12 MTTase</shortName>
        <shortName evidence="1">uS12 methylthiotransferase</shortName>
        <ecNumber evidence="1">2.8.4.4</ecNumber>
    </recommendedName>
    <alternativeName>
        <fullName evidence="1">Ribosomal protein uS12 (aspartate-C(3))-methylthiotransferase</fullName>
    </alternativeName>
    <alternativeName>
        <fullName evidence="1">Ribosome maturation factor RimO</fullName>
    </alternativeName>
</protein>
<comment type="function">
    <text evidence="1">Catalyzes the methylthiolation of an aspartic acid residue of ribosomal protein uS12.</text>
</comment>
<comment type="catalytic activity">
    <reaction evidence="1">
        <text>L-aspartate(89)-[ribosomal protein uS12]-hydrogen + (sulfur carrier)-SH + AH2 + 2 S-adenosyl-L-methionine = 3-methylsulfanyl-L-aspartate(89)-[ribosomal protein uS12]-hydrogen + (sulfur carrier)-H + 5'-deoxyadenosine + L-methionine + A + S-adenosyl-L-homocysteine + 2 H(+)</text>
        <dbReference type="Rhea" id="RHEA:37087"/>
        <dbReference type="Rhea" id="RHEA-COMP:10460"/>
        <dbReference type="Rhea" id="RHEA-COMP:10461"/>
        <dbReference type="Rhea" id="RHEA-COMP:14737"/>
        <dbReference type="Rhea" id="RHEA-COMP:14739"/>
        <dbReference type="ChEBI" id="CHEBI:13193"/>
        <dbReference type="ChEBI" id="CHEBI:15378"/>
        <dbReference type="ChEBI" id="CHEBI:17319"/>
        <dbReference type="ChEBI" id="CHEBI:17499"/>
        <dbReference type="ChEBI" id="CHEBI:29917"/>
        <dbReference type="ChEBI" id="CHEBI:29961"/>
        <dbReference type="ChEBI" id="CHEBI:57844"/>
        <dbReference type="ChEBI" id="CHEBI:57856"/>
        <dbReference type="ChEBI" id="CHEBI:59789"/>
        <dbReference type="ChEBI" id="CHEBI:64428"/>
        <dbReference type="ChEBI" id="CHEBI:73599"/>
        <dbReference type="EC" id="2.8.4.4"/>
    </reaction>
</comment>
<comment type="cofactor">
    <cofactor evidence="1">
        <name>[4Fe-4S] cluster</name>
        <dbReference type="ChEBI" id="CHEBI:49883"/>
    </cofactor>
    <text evidence="1">Binds 2 [4Fe-4S] clusters. One cluster is coordinated with 3 cysteines and an exchangeable S-adenosyl-L-methionine.</text>
</comment>
<comment type="subcellular location">
    <subcellularLocation>
        <location evidence="1">Cytoplasm</location>
    </subcellularLocation>
</comment>
<comment type="similarity">
    <text evidence="1">Belongs to the methylthiotransferase family. RimO subfamily.</text>
</comment>
<evidence type="ECO:0000255" key="1">
    <source>
        <dbReference type="HAMAP-Rule" id="MF_01865"/>
    </source>
</evidence>
<evidence type="ECO:0000255" key="2">
    <source>
        <dbReference type="PROSITE-ProRule" id="PRU01266"/>
    </source>
</evidence>
<dbReference type="EC" id="2.8.4.4" evidence="1"/>
<dbReference type="EMBL" id="CR626927">
    <property type="protein sequence ID" value="CAH08207.1"/>
    <property type="molecule type" value="Genomic_DNA"/>
</dbReference>
<dbReference type="RefSeq" id="WP_005787933.1">
    <property type="nucleotide sequence ID" value="NZ_UFTH01000001.1"/>
</dbReference>
<dbReference type="SMR" id="Q5LCF8"/>
<dbReference type="PaxDb" id="272559-BF9343_2426"/>
<dbReference type="GeneID" id="60365869"/>
<dbReference type="KEGG" id="bfs:BF9343_2426"/>
<dbReference type="eggNOG" id="COG0621">
    <property type="taxonomic scope" value="Bacteria"/>
</dbReference>
<dbReference type="HOGENOM" id="CLU_018697_0_1_10"/>
<dbReference type="Proteomes" id="UP000006731">
    <property type="component" value="Chromosome"/>
</dbReference>
<dbReference type="GO" id="GO:0005829">
    <property type="term" value="C:cytosol"/>
    <property type="evidence" value="ECO:0007669"/>
    <property type="project" value="TreeGrafter"/>
</dbReference>
<dbReference type="GO" id="GO:0051539">
    <property type="term" value="F:4 iron, 4 sulfur cluster binding"/>
    <property type="evidence" value="ECO:0007669"/>
    <property type="project" value="UniProtKB-UniRule"/>
</dbReference>
<dbReference type="GO" id="GO:0035599">
    <property type="term" value="F:aspartic acid methylthiotransferase activity"/>
    <property type="evidence" value="ECO:0007669"/>
    <property type="project" value="TreeGrafter"/>
</dbReference>
<dbReference type="GO" id="GO:0046872">
    <property type="term" value="F:metal ion binding"/>
    <property type="evidence" value="ECO:0007669"/>
    <property type="project" value="UniProtKB-KW"/>
</dbReference>
<dbReference type="GO" id="GO:0103039">
    <property type="term" value="F:protein methylthiotransferase activity"/>
    <property type="evidence" value="ECO:0007669"/>
    <property type="project" value="UniProtKB-EC"/>
</dbReference>
<dbReference type="GO" id="GO:0006400">
    <property type="term" value="P:tRNA modification"/>
    <property type="evidence" value="ECO:0007669"/>
    <property type="project" value="InterPro"/>
</dbReference>
<dbReference type="CDD" id="cd01335">
    <property type="entry name" value="Radical_SAM"/>
    <property type="match status" value="1"/>
</dbReference>
<dbReference type="FunFam" id="2.40.50.140:FF:000210">
    <property type="entry name" value="Ribosomal protein S12 methylthiotransferase RimO"/>
    <property type="match status" value="1"/>
</dbReference>
<dbReference type="FunFam" id="3.80.30.20:FF:000001">
    <property type="entry name" value="tRNA-2-methylthio-N(6)-dimethylallyladenosine synthase 2"/>
    <property type="match status" value="1"/>
</dbReference>
<dbReference type="Gene3D" id="3.40.50.12160">
    <property type="entry name" value="Methylthiotransferase, N-terminal domain"/>
    <property type="match status" value="1"/>
</dbReference>
<dbReference type="Gene3D" id="2.40.50.140">
    <property type="entry name" value="Nucleic acid-binding proteins"/>
    <property type="match status" value="1"/>
</dbReference>
<dbReference type="Gene3D" id="3.80.30.20">
    <property type="entry name" value="tm_1862 like domain"/>
    <property type="match status" value="1"/>
</dbReference>
<dbReference type="HAMAP" id="MF_01865">
    <property type="entry name" value="MTTase_RimO"/>
    <property type="match status" value="1"/>
</dbReference>
<dbReference type="InterPro" id="IPR006638">
    <property type="entry name" value="Elp3/MiaA/NifB-like_rSAM"/>
</dbReference>
<dbReference type="InterPro" id="IPR005839">
    <property type="entry name" value="Methylthiotransferase"/>
</dbReference>
<dbReference type="InterPro" id="IPR020612">
    <property type="entry name" value="Methylthiotransferase_CS"/>
</dbReference>
<dbReference type="InterPro" id="IPR013848">
    <property type="entry name" value="Methylthiotransferase_N"/>
</dbReference>
<dbReference type="InterPro" id="IPR038135">
    <property type="entry name" value="Methylthiotransferase_N_sf"/>
</dbReference>
<dbReference type="InterPro" id="IPR012340">
    <property type="entry name" value="NA-bd_OB-fold"/>
</dbReference>
<dbReference type="InterPro" id="IPR005840">
    <property type="entry name" value="Ribosomal_uS12_MeSTrfase_RimO"/>
</dbReference>
<dbReference type="InterPro" id="IPR007197">
    <property type="entry name" value="rSAM"/>
</dbReference>
<dbReference type="InterPro" id="IPR023404">
    <property type="entry name" value="rSAM_horseshoe"/>
</dbReference>
<dbReference type="InterPro" id="IPR002792">
    <property type="entry name" value="TRAM_dom"/>
</dbReference>
<dbReference type="NCBIfam" id="TIGR01125">
    <property type="entry name" value="30S ribosomal protein S12 methylthiotransferase RimO"/>
    <property type="match status" value="1"/>
</dbReference>
<dbReference type="NCBIfam" id="TIGR00089">
    <property type="entry name" value="MiaB/RimO family radical SAM methylthiotransferase"/>
    <property type="match status" value="1"/>
</dbReference>
<dbReference type="PANTHER" id="PTHR43837">
    <property type="entry name" value="RIBOSOMAL PROTEIN S12 METHYLTHIOTRANSFERASE RIMO"/>
    <property type="match status" value="1"/>
</dbReference>
<dbReference type="PANTHER" id="PTHR43837:SF1">
    <property type="entry name" value="RIBOSOMAL PROTEIN US12 METHYLTHIOTRANSFERASE RIMO"/>
    <property type="match status" value="1"/>
</dbReference>
<dbReference type="Pfam" id="PF04055">
    <property type="entry name" value="Radical_SAM"/>
    <property type="match status" value="1"/>
</dbReference>
<dbReference type="Pfam" id="PF18693">
    <property type="entry name" value="TRAM_2"/>
    <property type="match status" value="1"/>
</dbReference>
<dbReference type="Pfam" id="PF00919">
    <property type="entry name" value="UPF0004"/>
    <property type="match status" value="1"/>
</dbReference>
<dbReference type="SFLD" id="SFLDG01082">
    <property type="entry name" value="B12-binding_domain_containing"/>
    <property type="match status" value="1"/>
</dbReference>
<dbReference type="SFLD" id="SFLDS00029">
    <property type="entry name" value="Radical_SAM"/>
    <property type="match status" value="1"/>
</dbReference>
<dbReference type="SFLD" id="SFLDF00274">
    <property type="entry name" value="ribosomal_protein_S12_methylth"/>
    <property type="match status" value="1"/>
</dbReference>
<dbReference type="SMART" id="SM00729">
    <property type="entry name" value="Elp3"/>
    <property type="match status" value="1"/>
</dbReference>
<dbReference type="SUPFAM" id="SSF102114">
    <property type="entry name" value="Radical SAM enzymes"/>
    <property type="match status" value="1"/>
</dbReference>
<dbReference type="PROSITE" id="PS51449">
    <property type="entry name" value="MTTASE_N"/>
    <property type="match status" value="1"/>
</dbReference>
<dbReference type="PROSITE" id="PS01278">
    <property type="entry name" value="MTTASE_RADICAL"/>
    <property type="match status" value="1"/>
</dbReference>
<dbReference type="PROSITE" id="PS51918">
    <property type="entry name" value="RADICAL_SAM"/>
    <property type="match status" value="1"/>
</dbReference>
<dbReference type="PROSITE" id="PS50926">
    <property type="entry name" value="TRAM"/>
    <property type="match status" value="1"/>
</dbReference>